<reference key="1">
    <citation type="journal article" date="2005" name="PLoS Biol.">
        <title>The genome sequence of Rickettsia felis identifies the first putative conjugative plasmid in an obligate intracellular parasite.</title>
        <authorList>
            <person name="Ogata H."/>
            <person name="Renesto P."/>
            <person name="Audic S."/>
            <person name="Robert C."/>
            <person name="Blanc G."/>
            <person name="Fournier P.-E."/>
            <person name="Parinello H."/>
            <person name="Claverie J.-M."/>
            <person name="Raoult D."/>
        </authorList>
    </citation>
    <scope>NUCLEOTIDE SEQUENCE [LARGE SCALE GENOMIC DNA]</scope>
    <source>
        <strain>ATCC VR-1525 / URRWXCal2</strain>
    </source>
</reference>
<evidence type="ECO:0000250" key="1"/>
<evidence type="ECO:0000255" key="2"/>
<evidence type="ECO:0000305" key="3"/>
<dbReference type="EC" id="3.4.21.89"/>
<dbReference type="EMBL" id="CP000053">
    <property type="protein sequence ID" value="AAY62028.1"/>
    <property type="molecule type" value="Genomic_DNA"/>
</dbReference>
<dbReference type="SMR" id="Q4UKA7"/>
<dbReference type="STRING" id="315456.RF_1177"/>
<dbReference type="MEROPS" id="S26.001"/>
<dbReference type="KEGG" id="rfe:RF_1177"/>
<dbReference type="eggNOG" id="COG0681">
    <property type="taxonomic scope" value="Bacteria"/>
</dbReference>
<dbReference type="HOGENOM" id="CLU_028723_1_2_5"/>
<dbReference type="OrthoDB" id="9815782at2"/>
<dbReference type="Proteomes" id="UP000008548">
    <property type="component" value="Chromosome"/>
</dbReference>
<dbReference type="GO" id="GO:0005886">
    <property type="term" value="C:plasma membrane"/>
    <property type="evidence" value="ECO:0007669"/>
    <property type="project" value="UniProtKB-SubCell"/>
</dbReference>
<dbReference type="GO" id="GO:0004252">
    <property type="term" value="F:serine-type endopeptidase activity"/>
    <property type="evidence" value="ECO:0007669"/>
    <property type="project" value="UniProtKB-EC"/>
</dbReference>
<dbReference type="GO" id="GO:0006465">
    <property type="term" value="P:signal peptide processing"/>
    <property type="evidence" value="ECO:0007669"/>
    <property type="project" value="InterPro"/>
</dbReference>
<dbReference type="CDD" id="cd06530">
    <property type="entry name" value="S26_SPase_I"/>
    <property type="match status" value="1"/>
</dbReference>
<dbReference type="Gene3D" id="2.10.109.10">
    <property type="entry name" value="Umud Fragment, subunit A"/>
    <property type="match status" value="1"/>
</dbReference>
<dbReference type="InterPro" id="IPR036286">
    <property type="entry name" value="LexA/Signal_pep-like_sf"/>
</dbReference>
<dbReference type="InterPro" id="IPR000223">
    <property type="entry name" value="Pept_S26A_signal_pept_1"/>
</dbReference>
<dbReference type="InterPro" id="IPR019758">
    <property type="entry name" value="Pept_S26A_signal_pept_1_CS"/>
</dbReference>
<dbReference type="InterPro" id="IPR019757">
    <property type="entry name" value="Pept_S26A_signal_pept_1_Lys-AS"/>
</dbReference>
<dbReference type="InterPro" id="IPR019533">
    <property type="entry name" value="Peptidase_S26"/>
</dbReference>
<dbReference type="NCBIfam" id="TIGR02227">
    <property type="entry name" value="sigpep_I_bact"/>
    <property type="match status" value="1"/>
</dbReference>
<dbReference type="PANTHER" id="PTHR43390:SF1">
    <property type="entry name" value="CHLOROPLAST PROCESSING PEPTIDASE"/>
    <property type="match status" value="1"/>
</dbReference>
<dbReference type="PANTHER" id="PTHR43390">
    <property type="entry name" value="SIGNAL PEPTIDASE I"/>
    <property type="match status" value="1"/>
</dbReference>
<dbReference type="Pfam" id="PF10502">
    <property type="entry name" value="Peptidase_S26"/>
    <property type="match status" value="1"/>
</dbReference>
<dbReference type="PRINTS" id="PR00727">
    <property type="entry name" value="LEADERPTASE"/>
</dbReference>
<dbReference type="SUPFAM" id="SSF51306">
    <property type="entry name" value="LexA/Signal peptidase"/>
    <property type="match status" value="1"/>
</dbReference>
<dbReference type="PROSITE" id="PS00760">
    <property type="entry name" value="SPASE_I_2"/>
    <property type="match status" value="1"/>
</dbReference>
<dbReference type="PROSITE" id="PS00761">
    <property type="entry name" value="SPASE_I_3"/>
    <property type="match status" value="1"/>
</dbReference>
<comment type="catalytic activity">
    <reaction>
        <text>Cleavage of hydrophobic, N-terminal signal or leader sequences from secreted and periplasmic proteins.</text>
        <dbReference type="EC" id="3.4.21.89"/>
    </reaction>
</comment>
<comment type="subcellular location">
    <subcellularLocation>
        <location evidence="3">Cell inner membrane</location>
        <topology evidence="3">Single-pass type II membrane protein</topology>
    </subcellularLocation>
</comment>
<comment type="similarity">
    <text evidence="3">Belongs to the peptidase S26 family.</text>
</comment>
<gene>
    <name type="primary">lepB</name>
    <name type="ordered locus">RF_1177</name>
</gene>
<keyword id="KW-0997">Cell inner membrane</keyword>
<keyword id="KW-1003">Cell membrane</keyword>
<keyword id="KW-0378">Hydrolase</keyword>
<keyword id="KW-0472">Membrane</keyword>
<keyword id="KW-0812">Transmembrane</keyword>
<keyword id="KW-1133">Transmembrane helix</keyword>
<accession>Q4UKA7</accession>
<name>LEP_RICFE</name>
<organism>
    <name type="scientific">Rickettsia felis (strain ATCC VR-1525 / URRWXCal2)</name>
    <name type="common">Rickettsia azadi</name>
    <dbReference type="NCBI Taxonomy" id="315456"/>
    <lineage>
        <taxon>Bacteria</taxon>
        <taxon>Pseudomonadati</taxon>
        <taxon>Pseudomonadota</taxon>
        <taxon>Alphaproteobacteria</taxon>
        <taxon>Rickettsiales</taxon>
        <taxon>Rickettsiaceae</taxon>
        <taxon>Rickettsieae</taxon>
        <taxon>Rickettsia</taxon>
        <taxon>spotted fever group</taxon>
    </lineage>
</organism>
<feature type="chain" id="PRO_0000316275" description="Signal peptidase I">
    <location>
        <begin position="1"/>
        <end position="266"/>
    </location>
</feature>
<feature type="topological domain" description="Cytoplasmic" evidence="2">
    <location>
        <begin position="1"/>
        <end position="20"/>
    </location>
</feature>
<feature type="transmembrane region" description="Helical" evidence="2">
    <location>
        <begin position="21"/>
        <end position="41"/>
    </location>
</feature>
<feature type="topological domain" description="Periplasmic" evidence="2">
    <location>
        <begin position="42"/>
        <end position="266"/>
    </location>
</feature>
<feature type="active site" evidence="1">
    <location>
        <position position="45"/>
    </location>
</feature>
<feature type="active site" evidence="1">
    <location>
        <position position="108"/>
    </location>
</feature>
<proteinExistence type="inferred from homology"/>
<protein>
    <recommendedName>
        <fullName>Signal peptidase I</fullName>
        <shortName>SPase I</shortName>
        <ecNumber>3.4.21.89</ecNumber>
    </recommendedName>
    <alternativeName>
        <fullName>Leader peptidase I</fullName>
    </alternativeName>
</protein>
<sequence length="266" mass="31119">MQTDNTKSNTNKTAKQEWGSFAFVICIALLIRILIMEPFTVPTGSMKATILENDYIFSTKYSYGYSNYSLSFFDFIPLFKGRIFAREPERGDIVVFRPPNDMNVRYIKRLIGLPGDKIQLIDDVIYINDKKIERTEVGTYISEEGIKYLKFKETLPNGRTYFSYKLAPIFGVIYNDRYGNTDVFYVPEGKYFFLGDNRDQSNDSRVNLGFVPFENFIAKAQFIWLSTKITWWDNDIGVINLVLKLKPWIESVRLNRIFRNLYSTDE</sequence>